<evidence type="ECO:0000255" key="1">
    <source>
        <dbReference type="HAMAP-Rule" id="MF_00123"/>
    </source>
</evidence>
<accession>B6J3D4</accession>
<name>SYR_COXB2</name>
<keyword id="KW-0030">Aminoacyl-tRNA synthetase</keyword>
<keyword id="KW-0067">ATP-binding</keyword>
<keyword id="KW-0963">Cytoplasm</keyword>
<keyword id="KW-0436">Ligase</keyword>
<keyword id="KW-0547">Nucleotide-binding</keyword>
<keyword id="KW-0648">Protein biosynthesis</keyword>
<reference key="1">
    <citation type="journal article" date="2009" name="Infect. Immun.">
        <title>Comparative genomics reveal extensive transposon-mediated genomic plasticity and diversity among potential effector proteins within the genus Coxiella.</title>
        <authorList>
            <person name="Beare P.A."/>
            <person name="Unsworth N."/>
            <person name="Andoh M."/>
            <person name="Voth D.E."/>
            <person name="Omsland A."/>
            <person name="Gilk S.D."/>
            <person name="Williams K.P."/>
            <person name="Sobral B.W."/>
            <person name="Kupko J.J. III"/>
            <person name="Porcella S.F."/>
            <person name="Samuel J.E."/>
            <person name="Heinzen R.A."/>
        </authorList>
    </citation>
    <scope>NUCLEOTIDE SEQUENCE [LARGE SCALE GENOMIC DNA]</scope>
    <source>
        <strain>CbuG_Q212</strain>
    </source>
</reference>
<sequence length="592" mass="66707">MIDLSTMKQQIATLLNQAIERLKTKGVLKPEVTPVIKITHTTDPQHGDFATNLALTLSKAAGMSPHALAEKIVEALPPSGQITEVEIAGPGFINFFVTEGSYQTIVSSILKAGKDYGRSEMGKGQRVHMEYVSANPTGPLHVGHGRGAAYGACVANLLNAAGFEVHREYYVNDAGRQMGILALSVWIRYLQGYEASIELPKNAYQGEYIIDIAEALKAKYGKQFYHSVESIQAKIPEEIDSNADPEAYLDAWVTAQKDLLGPKDFECVFQAALDSILNDIKNDLEEFGVTYDDWFPESRLVREGLIQEGLDLLTKHGYVYEKNGAQWFRATALGDEKDRVLIRKNGLPTYFAADVAYHLHKFNQGYDQIIDIFGADHHGYIPRIRGFLKGLGKAPEKLHILLVQFAILYRGNEKVSMSTRGGTFVTLRELRHEVGNDAARFFYIMRKPDQHLDFDLELAKSQSNENPVYYIQYAHARICSVFRQLKTTQKNWDRPRGMENLSLLSTNYEKELLATLGRYPEVIKRAAMNYAPHLLAHYLQTLANQFHTYYNAERFLIEDDNLRNARLNLINAVQQIIRNGLTLLGVSAPEEM</sequence>
<proteinExistence type="inferred from homology"/>
<dbReference type="EC" id="6.1.1.19" evidence="1"/>
<dbReference type="EMBL" id="CP001019">
    <property type="protein sequence ID" value="ACJ19259.1"/>
    <property type="molecule type" value="Genomic_DNA"/>
</dbReference>
<dbReference type="RefSeq" id="WP_012570521.1">
    <property type="nucleotide sequence ID" value="NC_011527.1"/>
</dbReference>
<dbReference type="SMR" id="B6J3D4"/>
<dbReference type="KEGG" id="cbg:CbuG_2017"/>
<dbReference type="HOGENOM" id="CLU_006406_0_1_6"/>
<dbReference type="GO" id="GO:0005737">
    <property type="term" value="C:cytoplasm"/>
    <property type="evidence" value="ECO:0007669"/>
    <property type="project" value="UniProtKB-SubCell"/>
</dbReference>
<dbReference type="GO" id="GO:0004814">
    <property type="term" value="F:arginine-tRNA ligase activity"/>
    <property type="evidence" value="ECO:0007669"/>
    <property type="project" value="UniProtKB-UniRule"/>
</dbReference>
<dbReference type="GO" id="GO:0005524">
    <property type="term" value="F:ATP binding"/>
    <property type="evidence" value="ECO:0007669"/>
    <property type="project" value="UniProtKB-UniRule"/>
</dbReference>
<dbReference type="GO" id="GO:0006420">
    <property type="term" value="P:arginyl-tRNA aminoacylation"/>
    <property type="evidence" value="ECO:0007669"/>
    <property type="project" value="UniProtKB-UniRule"/>
</dbReference>
<dbReference type="CDD" id="cd07956">
    <property type="entry name" value="Anticodon_Ia_Arg"/>
    <property type="match status" value="1"/>
</dbReference>
<dbReference type="CDD" id="cd00671">
    <property type="entry name" value="ArgRS_core"/>
    <property type="match status" value="1"/>
</dbReference>
<dbReference type="FunFam" id="1.10.730.10:FF:000008">
    <property type="entry name" value="Arginine--tRNA ligase"/>
    <property type="match status" value="1"/>
</dbReference>
<dbReference type="FunFam" id="3.30.1360.70:FF:000003">
    <property type="entry name" value="Arginine--tRNA ligase"/>
    <property type="match status" value="1"/>
</dbReference>
<dbReference type="Gene3D" id="3.30.1360.70">
    <property type="entry name" value="Arginyl tRNA synthetase N-terminal domain"/>
    <property type="match status" value="1"/>
</dbReference>
<dbReference type="Gene3D" id="3.40.50.620">
    <property type="entry name" value="HUPs"/>
    <property type="match status" value="1"/>
</dbReference>
<dbReference type="Gene3D" id="1.10.730.10">
    <property type="entry name" value="Isoleucyl-tRNA Synthetase, Domain 1"/>
    <property type="match status" value="1"/>
</dbReference>
<dbReference type="HAMAP" id="MF_00123">
    <property type="entry name" value="Arg_tRNA_synth"/>
    <property type="match status" value="1"/>
</dbReference>
<dbReference type="InterPro" id="IPR001412">
    <property type="entry name" value="aa-tRNA-synth_I_CS"/>
</dbReference>
<dbReference type="InterPro" id="IPR001278">
    <property type="entry name" value="Arg-tRNA-ligase"/>
</dbReference>
<dbReference type="InterPro" id="IPR005148">
    <property type="entry name" value="Arg-tRNA-synth_N"/>
</dbReference>
<dbReference type="InterPro" id="IPR036695">
    <property type="entry name" value="Arg-tRNA-synth_N_sf"/>
</dbReference>
<dbReference type="InterPro" id="IPR035684">
    <property type="entry name" value="ArgRS_core"/>
</dbReference>
<dbReference type="InterPro" id="IPR008909">
    <property type="entry name" value="DALR_anticod-bd"/>
</dbReference>
<dbReference type="InterPro" id="IPR014729">
    <property type="entry name" value="Rossmann-like_a/b/a_fold"/>
</dbReference>
<dbReference type="InterPro" id="IPR009080">
    <property type="entry name" value="tRNAsynth_Ia_anticodon-bd"/>
</dbReference>
<dbReference type="NCBIfam" id="TIGR00456">
    <property type="entry name" value="argS"/>
    <property type="match status" value="1"/>
</dbReference>
<dbReference type="PANTHER" id="PTHR11956:SF5">
    <property type="entry name" value="ARGININE--TRNA LIGASE, CYTOPLASMIC"/>
    <property type="match status" value="1"/>
</dbReference>
<dbReference type="PANTHER" id="PTHR11956">
    <property type="entry name" value="ARGINYL-TRNA SYNTHETASE"/>
    <property type="match status" value="1"/>
</dbReference>
<dbReference type="Pfam" id="PF03485">
    <property type="entry name" value="Arg_tRNA_synt_N"/>
    <property type="match status" value="1"/>
</dbReference>
<dbReference type="Pfam" id="PF05746">
    <property type="entry name" value="DALR_1"/>
    <property type="match status" value="1"/>
</dbReference>
<dbReference type="Pfam" id="PF00750">
    <property type="entry name" value="tRNA-synt_1d"/>
    <property type="match status" value="1"/>
</dbReference>
<dbReference type="PRINTS" id="PR01038">
    <property type="entry name" value="TRNASYNTHARG"/>
</dbReference>
<dbReference type="SMART" id="SM01016">
    <property type="entry name" value="Arg_tRNA_synt_N"/>
    <property type="match status" value="1"/>
</dbReference>
<dbReference type="SMART" id="SM00836">
    <property type="entry name" value="DALR_1"/>
    <property type="match status" value="1"/>
</dbReference>
<dbReference type="SUPFAM" id="SSF47323">
    <property type="entry name" value="Anticodon-binding domain of a subclass of class I aminoacyl-tRNA synthetases"/>
    <property type="match status" value="1"/>
</dbReference>
<dbReference type="SUPFAM" id="SSF55190">
    <property type="entry name" value="Arginyl-tRNA synthetase (ArgRS), N-terminal 'additional' domain"/>
    <property type="match status" value="1"/>
</dbReference>
<dbReference type="SUPFAM" id="SSF52374">
    <property type="entry name" value="Nucleotidylyl transferase"/>
    <property type="match status" value="1"/>
</dbReference>
<dbReference type="PROSITE" id="PS00178">
    <property type="entry name" value="AA_TRNA_LIGASE_I"/>
    <property type="match status" value="1"/>
</dbReference>
<gene>
    <name evidence="1" type="primary">argS</name>
    <name type="ordered locus">CbuG_2017</name>
</gene>
<protein>
    <recommendedName>
        <fullName evidence="1">Arginine--tRNA ligase</fullName>
        <ecNumber evidence="1">6.1.1.19</ecNumber>
    </recommendedName>
    <alternativeName>
        <fullName evidence="1">Arginyl-tRNA synthetase</fullName>
        <shortName evidence="1">ArgRS</shortName>
    </alternativeName>
</protein>
<organism>
    <name type="scientific">Coxiella burnetii (strain CbuG_Q212)</name>
    <name type="common">Coxiella burnetii (strain Q212)</name>
    <dbReference type="NCBI Taxonomy" id="434923"/>
    <lineage>
        <taxon>Bacteria</taxon>
        <taxon>Pseudomonadati</taxon>
        <taxon>Pseudomonadota</taxon>
        <taxon>Gammaproteobacteria</taxon>
        <taxon>Legionellales</taxon>
        <taxon>Coxiellaceae</taxon>
        <taxon>Coxiella</taxon>
    </lineage>
</organism>
<comment type="catalytic activity">
    <reaction evidence="1">
        <text>tRNA(Arg) + L-arginine + ATP = L-arginyl-tRNA(Arg) + AMP + diphosphate</text>
        <dbReference type="Rhea" id="RHEA:20301"/>
        <dbReference type="Rhea" id="RHEA-COMP:9658"/>
        <dbReference type="Rhea" id="RHEA-COMP:9673"/>
        <dbReference type="ChEBI" id="CHEBI:30616"/>
        <dbReference type="ChEBI" id="CHEBI:32682"/>
        <dbReference type="ChEBI" id="CHEBI:33019"/>
        <dbReference type="ChEBI" id="CHEBI:78442"/>
        <dbReference type="ChEBI" id="CHEBI:78513"/>
        <dbReference type="ChEBI" id="CHEBI:456215"/>
        <dbReference type="EC" id="6.1.1.19"/>
    </reaction>
</comment>
<comment type="subunit">
    <text evidence="1">Monomer.</text>
</comment>
<comment type="subcellular location">
    <subcellularLocation>
        <location evidence="1">Cytoplasm</location>
    </subcellularLocation>
</comment>
<comment type="similarity">
    <text evidence="1">Belongs to the class-I aminoacyl-tRNA synthetase family.</text>
</comment>
<feature type="chain" id="PRO_1000095355" description="Arginine--tRNA ligase">
    <location>
        <begin position="1"/>
        <end position="592"/>
    </location>
</feature>
<feature type="short sequence motif" description="'HIGH' region">
    <location>
        <begin position="134"/>
        <end position="144"/>
    </location>
</feature>